<keyword id="KW-0472">Membrane</keyword>
<keyword id="KW-1185">Reference proteome</keyword>
<keyword id="KW-0812">Transmembrane</keyword>
<keyword id="KW-1133">Transmembrane helix</keyword>
<proteinExistence type="predicted"/>
<sequence length="55" mass="6698">MNIPKTCFQIHNKIQVQNYLIRINLNIFLIYHFSPIYCPYLFLFTVFFNSLINLI</sequence>
<organismHost>
    <name type="scientific">Acheta domesticus</name>
    <name type="common">House cricket</name>
    <dbReference type="NCBI Taxonomy" id="6997"/>
</organismHost>
<organismHost>
    <name type="scientific">Chilo suppressalis</name>
    <name type="common">Asiatic rice borer moth</name>
    <dbReference type="NCBI Taxonomy" id="168631"/>
</organismHost>
<organismHost>
    <name type="scientific">Gryllus bimaculatus</name>
    <name type="common">Two-spotted cricket</name>
    <dbReference type="NCBI Taxonomy" id="6999"/>
</organismHost>
<organismHost>
    <name type="scientific">Gryllus campestris</name>
    <dbReference type="NCBI Taxonomy" id="58607"/>
</organismHost>
<organismHost>
    <name type="scientific">Spodoptera frugiperda</name>
    <name type="common">Fall armyworm</name>
    <dbReference type="NCBI Taxonomy" id="7108"/>
</organismHost>
<evidence type="ECO:0000255" key="1"/>
<evidence type="ECO:0000305" key="2"/>
<name>065R_IIV6</name>
<gene>
    <name type="ORF">IIV6-065R</name>
</gene>
<reference key="1">
    <citation type="journal article" date="2001" name="Virology">
        <title>Analysis of the first complete DNA sequence of an invertebrate iridovirus: coding strategy of the genome of Chilo iridescent virus.</title>
        <authorList>
            <person name="Jakob N.J."/>
            <person name="Mueller K."/>
            <person name="Bahr U."/>
            <person name="Darai G."/>
        </authorList>
    </citation>
    <scope>NUCLEOTIDE SEQUENCE [LARGE SCALE GENOMIC DNA]</scope>
</reference>
<reference key="2">
    <citation type="journal article" date="2007" name="Virol. J.">
        <title>Comparative genomic analysis of the family Iridoviridae: re-annotating and defining the core set of iridovirus genes.</title>
        <authorList>
            <person name="Eaton H.E."/>
            <person name="Metcalf J."/>
            <person name="Penny E."/>
            <person name="Tcherepanov V."/>
            <person name="Upton C."/>
            <person name="Brunetti C.R."/>
        </authorList>
    </citation>
    <scope>GENOME REANNOTATION</scope>
</reference>
<accession>Q91G40</accession>
<feature type="chain" id="PRO_0000377976" description="Uncharacterized protein 065R">
    <location>
        <begin position="1"/>
        <end position="55"/>
    </location>
</feature>
<feature type="transmembrane region" description="Helical" evidence="1">
    <location>
        <begin position="27"/>
        <end position="47"/>
    </location>
</feature>
<organism>
    <name type="scientific">Invertebrate iridescent virus 6</name>
    <name type="common">IIV-6</name>
    <name type="synonym">Chilo iridescent virus</name>
    <dbReference type="NCBI Taxonomy" id="176652"/>
    <lineage>
        <taxon>Viruses</taxon>
        <taxon>Varidnaviria</taxon>
        <taxon>Bamfordvirae</taxon>
        <taxon>Nucleocytoviricota</taxon>
        <taxon>Megaviricetes</taxon>
        <taxon>Pimascovirales</taxon>
        <taxon>Iridoviridae</taxon>
        <taxon>Betairidovirinae</taxon>
        <taxon>Iridovirus</taxon>
    </lineage>
</organism>
<dbReference type="EMBL" id="AF303741">
    <property type="protein sequence ID" value="AAK81992.1"/>
    <property type="molecule type" value="Genomic_DNA"/>
</dbReference>
<dbReference type="RefSeq" id="NP_149528.1">
    <property type="nucleotide sequence ID" value="NC_003038.1"/>
</dbReference>
<dbReference type="KEGG" id="vg:1733112"/>
<dbReference type="Proteomes" id="UP000001359">
    <property type="component" value="Genome"/>
</dbReference>
<dbReference type="GO" id="GO:0016020">
    <property type="term" value="C:membrane"/>
    <property type="evidence" value="ECO:0007669"/>
    <property type="project" value="UniProtKB-SubCell"/>
</dbReference>
<comment type="subcellular location">
    <subcellularLocation>
        <location evidence="2">Membrane</location>
        <topology evidence="2">Single-pass membrane protein</topology>
    </subcellularLocation>
</comment>
<protein>
    <recommendedName>
        <fullName>Uncharacterized protein 065R</fullName>
    </recommendedName>
</protein>